<keyword id="KW-0963">Cytoplasm</keyword>
<keyword id="KW-0238">DNA-binding</keyword>
<keyword id="KW-0804">Transcription</keyword>
<keyword id="KW-0805">Transcription regulation</keyword>
<feature type="chain" id="PRO_1000132225" description="Probable transcriptional regulatory protein OTT_1378">
    <location>
        <begin position="1"/>
        <end position="249"/>
    </location>
</feature>
<comment type="subcellular location">
    <subcellularLocation>
        <location evidence="1">Cytoplasm</location>
    </subcellularLocation>
</comment>
<comment type="similarity">
    <text evidence="1">Belongs to the TACO1 family.</text>
</comment>
<reference key="1">
    <citation type="journal article" date="2008" name="DNA Res.">
        <title>The whole-genome sequencing of the obligate intracellular bacterium Orientia tsutsugamushi revealed massive gene amplification during reductive genome evolution.</title>
        <authorList>
            <person name="Nakayama K."/>
            <person name="Yamashita A."/>
            <person name="Kurokawa K."/>
            <person name="Morimoto T."/>
            <person name="Ogawa M."/>
            <person name="Fukuhara M."/>
            <person name="Urakami H."/>
            <person name="Ohnishi M."/>
            <person name="Uchiyama I."/>
            <person name="Ogura Y."/>
            <person name="Ooka T."/>
            <person name="Oshima K."/>
            <person name="Tamura A."/>
            <person name="Hattori M."/>
            <person name="Hayashi T."/>
        </authorList>
    </citation>
    <scope>NUCLEOTIDE SEQUENCE [LARGE SCALE GENOMIC DNA]</scope>
    <source>
        <strain>Ikeda</strain>
    </source>
</reference>
<evidence type="ECO:0000255" key="1">
    <source>
        <dbReference type="HAMAP-Rule" id="MF_00693"/>
    </source>
</evidence>
<gene>
    <name type="ordered locus">OTT_1378</name>
</gene>
<name>Y1378_ORITI</name>
<proteinExistence type="inferred from homology"/>
<dbReference type="EMBL" id="AP008981">
    <property type="protein sequence ID" value="BAG40836.1"/>
    <property type="molecule type" value="Genomic_DNA"/>
</dbReference>
<dbReference type="RefSeq" id="WP_012461878.1">
    <property type="nucleotide sequence ID" value="NC_010793.1"/>
</dbReference>
<dbReference type="SMR" id="B3CTY9"/>
<dbReference type="KEGG" id="ott:OTT_1378"/>
<dbReference type="HOGENOM" id="CLU_062974_2_2_5"/>
<dbReference type="OrthoDB" id="9781053at2"/>
<dbReference type="Proteomes" id="UP000001033">
    <property type="component" value="Chromosome"/>
</dbReference>
<dbReference type="GO" id="GO:0005737">
    <property type="term" value="C:cytoplasm"/>
    <property type="evidence" value="ECO:0007669"/>
    <property type="project" value="UniProtKB-SubCell"/>
</dbReference>
<dbReference type="GO" id="GO:0003677">
    <property type="term" value="F:DNA binding"/>
    <property type="evidence" value="ECO:0007669"/>
    <property type="project" value="UniProtKB-UniRule"/>
</dbReference>
<dbReference type="GO" id="GO:0006355">
    <property type="term" value="P:regulation of DNA-templated transcription"/>
    <property type="evidence" value="ECO:0007669"/>
    <property type="project" value="UniProtKB-UniRule"/>
</dbReference>
<dbReference type="FunFam" id="1.10.10.200:FF:000002">
    <property type="entry name" value="Probable transcriptional regulatory protein CLM62_37755"/>
    <property type="match status" value="1"/>
</dbReference>
<dbReference type="Gene3D" id="1.10.10.200">
    <property type="match status" value="1"/>
</dbReference>
<dbReference type="Gene3D" id="3.30.70.980">
    <property type="match status" value="2"/>
</dbReference>
<dbReference type="HAMAP" id="MF_00693">
    <property type="entry name" value="Transcrip_reg_TACO1"/>
    <property type="match status" value="1"/>
</dbReference>
<dbReference type="InterPro" id="IPR017856">
    <property type="entry name" value="Integrase-like_N"/>
</dbReference>
<dbReference type="InterPro" id="IPR048300">
    <property type="entry name" value="TACO1_YebC-like_2nd/3rd_dom"/>
</dbReference>
<dbReference type="InterPro" id="IPR049083">
    <property type="entry name" value="TACO1_YebC_N"/>
</dbReference>
<dbReference type="InterPro" id="IPR002876">
    <property type="entry name" value="Transcrip_reg_TACO1-like"/>
</dbReference>
<dbReference type="InterPro" id="IPR026564">
    <property type="entry name" value="Transcrip_reg_TACO1-like_dom3"/>
</dbReference>
<dbReference type="InterPro" id="IPR029072">
    <property type="entry name" value="YebC-like"/>
</dbReference>
<dbReference type="NCBIfam" id="NF001030">
    <property type="entry name" value="PRK00110.1"/>
    <property type="match status" value="1"/>
</dbReference>
<dbReference type="NCBIfam" id="NF009044">
    <property type="entry name" value="PRK12378.1"/>
    <property type="match status" value="1"/>
</dbReference>
<dbReference type="NCBIfam" id="TIGR01033">
    <property type="entry name" value="YebC/PmpR family DNA-binding transcriptional regulator"/>
    <property type="match status" value="1"/>
</dbReference>
<dbReference type="PANTHER" id="PTHR12532:SF11">
    <property type="match status" value="1"/>
</dbReference>
<dbReference type="PANTHER" id="PTHR12532">
    <property type="entry name" value="TRANSLATIONAL ACTIVATOR OF CYTOCHROME C OXIDASE 1"/>
    <property type="match status" value="1"/>
</dbReference>
<dbReference type="Pfam" id="PF20772">
    <property type="entry name" value="TACO1_YebC_N"/>
    <property type="match status" value="1"/>
</dbReference>
<dbReference type="Pfam" id="PF01709">
    <property type="entry name" value="Transcrip_reg"/>
    <property type="match status" value="1"/>
</dbReference>
<dbReference type="SUPFAM" id="SSF75625">
    <property type="entry name" value="YebC-like"/>
    <property type="match status" value="1"/>
</dbReference>
<sequence>MAGHSKFKNIQHRKGAQDKKKAKLFASLVREISLSAKSGADIQYNPRLRAAISAAKFNNLPKDRIEKAIAHANNKDNYENYFEITYEGIIFDGIAIIVEALTDNTNRTAANVRAIFSKYGGNLVGTGNASFLFDRLGIIKFESKVSTSEELFDAAIELGAEDIELDEEYHVVYTPIKLFTNIIEELAQLFGYPVESYIGWRPRNTVLISDTEKAQKLIKLVNALDDNDDVQRFFGNYEFSEQIYNNLLT</sequence>
<organism>
    <name type="scientific">Orientia tsutsugamushi (strain Ikeda)</name>
    <name type="common">Rickettsia tsutsugamushi</name>
    <dbReference type="NCBI Taxonomy" id="334380"/>
    <lineage>
        <taxon>Bacteria</taxon>
        <taxon>Pseudomonadati</taxon>
        <taxon>Pseudomonadota</taxon>
        <taxon>Alphaproteobacteria</taxon>
        <taxon>Rickettsiales</taxon>
        <taxon>Rickettsiaceae</taxon>
        <taxon>Rickettsieae</taxon>
        <taxon>Orientia</taxon>
    </lineage>
</organism>
<accession>B3CTY9</accession>
<protein>
    <recommendedName>
        <fullName evidence="1">Probable transcriptional regulatory protein OTT_1378</fullName>
    </recommendedName>
</protein>